<organism>
    <name type="scientific">Pyrococcus horikoshii (strain ATCC 700860 / DSM 12428 / JCM 9974 / NBRC 100139 / OT-3)</name>
    <dbReference type="NCBI Taxonomy" id="70601"/>
    <lineage>
        <taxon>Archaea</taxon>
        <taxon>Methanobacteriati</taxon>
        <taxon>Methanobacteriota</taxon>
        <taxon>Thermococci</taxon>
        <taxon>Thermococcales</taxon>
        <taxon>Thermococcaceae</taxon>
        <taxon>Pyrococcus</taxon>
    </lineage>
</organism>
<evidence type="ECO:0000255" key="1">
    <source>
        <dbReference type="HAMAP-Rule" id="MF_00351"/>
    </source>
</evidence>
<evidence type="ECO:0007829" key="2">
    <source>
        <dbReference type="PDB" id="1G8A"/>
    </source>
</evidence>
<dbReference type="EC" id="2.1.1.-" evidence="1"/>
<dbReference type="EMBL" id="BA000001">
    <property type="protein sequence ID" value="BAA29120.1"/>
    <property type="molecule type" value="Genomic_DNA"/>
</dbReference>
<dbReference type="PIR" id="A71224">
    <property type="entry name" value="A71224"/>
</dbReference>
<dbReference type="RefSeq" id="WP_010884167.1">
    <property type="nucleotide sequence ID" value="NC_000961.1"/>
</dbReference>
<dbReference type="PDB" id="1G8A">
    <property type="method" value="X-ray"/>
    <property type="resolution" value="1.40 A"/>
    <property type="chains" value="A=1-227"/>
</dbReference>
<dbReference type="PDBsum" id="1G8A"/>
<dbReference type="SMR" id="O57811"/>
<dbReference type="STRING" id="70601.gene:9376959"/>
<dbReference type="EnsemblBacteria" id="BAA29120">
    <property type="protein sequence ID" value="BAA29120"/>
    <property type="gene ID" value="BAA29120"/>
</dbReference>
<dbReference type="GeneID" id="1443949"/>
<dbReference type="KEGG" id="pho:PH0052"/>
<dbReference type="eggNOG" id="arCOG00078">
    <property type="taxonomic scope" value="Archaea"/>
</dbReference>
<dbReference type="OrthoDB" id="6244at2157"/>
<dbReference type="EvolutionaryTrace" id="O57811"/>
<dbReference type="Proteomes" id="UP000000752">
    <property type="component" value="Chromosome"/>
</dbReference>
<dbReference type="GO" id="GO:1990259">
    <property type="term" value="F:histone H2AQ104 methyltransferase activity"/>
    <property type="evidence" value="ECO:0007669"/>
    <property type="project" value="TreeGrafter"/>
</dbReference>
<dbReference type="GO" id="GO:0003723">
    <property type="term" value="F:RNA binding"/>
    <property type="evidence" value="ECO:0007669"/>
    <property type="project" value="UniProtKB-UniRule"/>
</dbReference>
<dbReference type="GO" id="GO:0008649">
    <property type="term" value="F:rRNA methyltransferase activity"/>
    <property type="evidence" value="ECO:0007669"/>
    <property type="project" value="TreeGrafter"/>
</dbReference>
<dbReference type="GO" id="GO:0000494">
    <property type="term" value="P:box C/D sno(s)RNA 3'-end processing"/>
    <property type="evidence" value="ECO:0007669"/>
    <property type="project" value="TreeGrafter"/>
</dbReference>
<dbReference type="GO" id="GO:0008033">
    <property type="term" value="P:tRNA processing"/>
    <property type="evidence" value="ECO:0007669"/>
    <property type="project" value="UniProtKB-UniRule"/>
</dbReference>
<dbReference type="CDD" id="cd02440">
    <property type="entry name" value="AdoMet_MTases"/>
    <property type="match status" value="1"/>
</dbReference>
<dbReference type="FunFam" id="3.30.200.20:FF:000613">
    <property type="entry name" value="Fibrillarin-like rRNA/tRNA 2'-O-methyltransferase"/>
    <property type="match status" value="1"/>
</dbReference>
<dbReference type="Gene3D" id="3.30.200.20">
    <property type="entry name" value="Phosphorylase Kinase, domain 1"/>
    <property type="match status" value="1"/>
</dbReference>
<dbReference type="Gene3D" id="3.40.50.150">
    <property type="entry name" value="Vaccinia Virus protein VP39"/>
    <property type="match status" value="1"/>
</dbReference>
<dbReference type="HAMAP" id="MF_00351">
    <property type="entry name" value="RNA_methyltransf_FlpA"/>
    <property type="match status" value="1"/>
</dbReference>
<dbReference type="InterPro" id="IPR000692">
    <property type="entry name" value="Fibrillarin"/>
</dbReference>
<dbReference type="InterPro" id="IPR020813">
    <property type="entry name" value="Fibrillarin_CS"/>
</dbReference>
<dbReference type="InterPro" id="IPR029063">
    <property type="entry name" value="SAM-dependent_MTases_sf"/>
</dbReference>
<dbReference type="NCBIfam" id="NF003276">
    <property type="entry name" value="PRK04266.1-2"/>
    <property type="match status" value="1"/>
</dbReference>
<dbReference type="NCBIfam" id="NF003277">
    <property type="entry name" value="PRK04266.1-3"/>
    <property type="match status" value="1"/>
</dbReference>
<dbReference type="PANTHER" id="PTHR10335:SF17">
    <property type="entry name" value="FIBRILLARIN"/>
    <property type="match status" value="1"/>
</dbReference>
<dbReference type="PANTHER" id="PTHR10335">
    <property type="entry name" value="RRNA 2-O-METHYLTRANSFERASE FIBRILLARIN"/>
    <property type="match status" value="1"/>
</dbReference>
<dbReference type="Pfam" id="PF01269">
    <property type="entry name" value="Fibrillarin"/>
    <property type="match status" value="1"/>
</dbReference>
<dbReference type="PIRSF" id="PIRSF006540">
    <property type="entry name" value="Nop17p"/>
    <property type="match status" value="1"/>
</dbReference>
<dbReference type="PRINTS" id="PR00052">
    <property type="entry name" value="FIBRILLARIN"/>
</dbReference>
<dbReference type="SMART" id="SM01206">
    <property type="entry name" value="Fibrillarin"/>
    <property type="match status" value="1"/>
</dbReference>
<dbReference type="SUPFAM" id="SSF53335">
    <property type="entry name" value="S-adenosyl-L-methionine-dependent methyltransferases"/>
    <property type="match status" value="1"/>
</dbReference>
<dbReference type="PROSITE" id="PS00566">
    <property type="entry name" value="FIBRILLARIN"/>
    <property type="match status" value="1"/>
</dbReference>
<accession>O57811</accession>
<gene>
    <name evidence="1" type="primary">flpA</name>
    <name type="ordered locus">PH0052</name>
</gene>
<proteinExistence type="evidence at protein level"/>
<protein>
    <recommendedName>
        <fullName evidence="1">Fibrillarin-like rRNA/tRNA 2'-O-methyltransferase</fullName>
        <ecNumber evidence="1">2.1.1.-</ecNumber>
    </recommendedName>
</protein>
<sequence>MVEVKKHKFPGVYTVIDDDGSERIATKNLVPGQRVYGERVIKWEGEEYRIWNPNRSKLGAAIMNGLKNFPIKPGKSVLYLGIASGTTASHVSDIVGWEGKIFGIEFSPRVLRELVPIVEERRNIVPILGDATKPEEYRALVPKVDVIFEDVAQPTQAKILIDNAEVYLKRGGYGMIAVKSRSIDVTKEPEQVFREVERELSEYFEVIERLNLEPYEKDHALFVVRKT</sequence>
<name>FLPA_PYRHO</name>
<comment type="function">
    <text evidence="1">Involved in pre-rRNA and tRNA processing. Utilizes the methyl donor S-adenosyl-L-methionine to catalyze the site-specific 2'-hydroxyl methylation of ribose moieties in rRNA and tRNA. Site specificity is provided by a guide RNA that base pairs with the substrate. Methylation occurs at a characteristic distance from the sequence involved in base pairing with the guide RNA.</text>
</comment>
<comment type="subunit">
    <text evidence="1">Interacts with nop5. Component of box C/D small ribonucleoprotein (sRNP) particles that contain rpl7ae, FlpA and nop5, plus a guide RNA.</text>
</comment>
<comment type="similarity">
    <text evidence="1">Belongs to the methyltransferase superfamily. Fibrillarin family.</text>
</comment>
<feature type="chain" id="PRO_0000148546" description="Fibrillarin-like rRNA/tRNA 2'-O-methyltransferase">
    <location>
        <begin position="1"/>
        <end position="227"/>
    </location>
</feature>
<feature type="binding site" evidence="1">
    <location>
        <begin position="86"/>
        <end position="87"/>
    </location>
    <ligand>
        <name>S-adenosyl-L-methionine</name>
        <dbReference type="ChEBI" id="CHEBI:59789"/>
    </ligand>
</feature>
<feature type="binding site" evidence="1">
    <location>
        <begin position="105"/>
        <end position="106"/>
    </location>
    <ligand>
        <name>S-adenosyl-L-methionine</name>
        <dbReference type="ChEBI" id="CHEBI:59789"/>
    </ligand>
</feature>
<feature type="binding site" evidence="1">
    <location>
        <begin position="130"/>
        <end position="131"/>
    </location>
    <ligand>
        <name>S-adenosyl-L-methionine</name>
        <dbReference type="ChEBI" id="CHEBI:59789"/>
    </ligand>
</feature>
<feature type="binding site" evidence="1">
    <location>
        <begin position="150"/>
        <end position="153"/>
    </location>
    <ligand>
        <name>S-adenosyl-L-methionine</name>
        <dbReference type="ChEBI" id="CHEBI:59789"/>
    </ligand>
</feature>
<feature type="strand" evidence="2">
    <location>
        <begin position="3"/>
        <end position="6"/>
    </location>
</feature>
<feature type="strand" evidence="2">
    <location>
        <begin position="12"/>
        <end position="16"/>
    </location>
</feature>
<feature type="strand" evidence="2">
    <location>
        <begin position="18"/>
        <end position="20"/>
    </location>
</feature>
<feature type="strand" evidence="2">
    <location>
        <begin position="22"/>
        <end position="27"/>
    </location>
</feature>
<feature type="strand" evidence="2">
    <location>
        <begin position="40"/>
        <end position="43"/>
    </location>
</feature>
<feature type="strand" evidence="2">
    <location>
        <begin position="46"/>
        <end position="50"/>
    </location>
</feature>
<feature type="turn" evidence="2">
    <location>
        <begin position="53"/>
        <end position="55"/>
    </location>
</feature>
<feature type="helix" evidence="2">
    <location>
        <begin position="57"/>
        <end position="63"/>
    </location>
</feature>
<feature type="strand" evidence="2">
    <location>
        <begin position="76"/>
        <end position="80"/>
    </location>
</feature>
<feature type="turn" evidence="2">
    <location>
        <begin position="81"/>
        <end position="83"/>
    </location>
</feature>
<feature type="helix" evidence="2">
    <location>
        <begin position="87"/>
        <end position="95"/>
    </location>
</feature>
<feature type="strand" evidence="2">
    <location>
        <begin position="99"/>
        <end position="106"/>
    </location>
</feature>
<feature type="helix" evidence="2">
    <location>
        <begin position="108"/>
        <end position="118"/>
    </location>
</feature>
<feature type="strand" evidence="2">
    <location>
        <begin position="124"/>
        <end position="128"/>
    </location>
</feature>
<feature type="helix" evidence="2">
    <location>
        <begin position="134"/>
        <end position="137"/>
    </location>
</feature>
<feature type="turn" evidence="2">
    <location>
        <begin position="138"/>
        <end position="140"/>
    </location>
</feature>
<feature type="strand" evidence="2">
    <location>
        <begin position="144"/>
        <end position="149"/>
    </location>
</feature>
<feature type="helix" evidence="2">
    <location>
        <begin position="156"/>
        <end position="167"/>
    </location>
</feature>
<feature type="strand" evidence="2">
    <location>
        <begin position="168"/>
        <end position="179"/>
    </location>
</feature>
<feature type="helix" evidence="2">
    <location>
        <begin position="180"/>
        <end position="182"/>
    </location>
</feature>
<feature type="helix" evidence="2">
    <location>
        <begin position="189"/>
        <end position="201"/>
    </location>
</feature>
<feature type="strand" evidence="2">
    <location>
        <begin position="204"/>
        <end position="211"/>
    </location>
</feature>
<feature type="turn" evidence="2">
    <location>
        <begin position="213"/>
        <end position="215"/>
    </location>
</feature>
<feature type="strand" evidence="2">
    <location>
        <begin position="216"/>
        <end position="225"/>
    </location>
</feature>
<reference key="1">
    <citation type="journal article" date="1998" name="DNA Res.">
        <title>Complete sequence and gene organization of the genome of a hyper-thermophilic archaebacterium, Pyrococcus horikoshii OT3.</title>
        <authorList>
            <person name="Kawarabayasi Y."/>
            <person name="Sawada M."/>
            <person name="Horikawa H."/>
            <person name="Haikawa Y."/>
            <person name="Hino Y."/>
            <person name="Yamamoto S."/>
            <person name="Sekine M."/>
            <person name="Baba S."/>
            <person name="Kosugi H."/>
            <person name="Hosoyama A."/>
            <person name="Nagai Y."/>
            <person name="Sakai M."/>
            <person name="Ogura K."/>
            <person name="Otsuka R."/>
            <person name="Nakazawa H."/>
            <person name="Takamiya M."/>
            <person name="Ohfuku Y."/>
            <person name="Funahashi T."/>
            <person name="Tanaka T."/>
            <person name="Kudoh Y."/>
            <person name="Yamazaki J."/>
            <person name="Kushida N."/>
            <person name="Oguchi A."/>
            <person name="Aoki K."/>
            <person name="Yoshizawa T."/>
            <person name="Nakamura Y."/>
            <person name="Robb F.T."/>
            <person name="Horikoshi K."/>
            <person name="Masuchi Y."/>
            <person name="Shizuya H."/>
            <person name="Kikuchi H."/>
        </authorList>
    </citation>
    <scope>NUCLEOTIDE SEQUENCE [LARGE SCALE GENOMIC DNA]</scope>
    <source>
        <strain>ATCC 700860 / DSM 12428 / JCM 9974 / NBRC 100139 / OT-3</strain>
    </source>
</reference>
<reference key="2">
    <citation type="submission" date="2005-01" db="PDB data bank">
        <title>A structural approach to gene function and structure quality for Pyrococcus horikoshii fibrillarin.</title>
        <authorList>
            <consortium name="Berkeley structural genomics center (BSGC)"/>
        </authorList>
    </citation>
    <scope>X-RAY CRYSTALLOGRAPHY (1.4 ANGSTROMS)</scope>
</reference>
<keyword id="KW-0002">3D-structure</keyword>
<keyword id="KW-0489">Methyltransferase</keyword>
<keyword id="KW-0694">RNA-binding</keyword>
<keyword id="KW-0698">rRNA processing</keyword>
<keyword id="KW-0808">Transferase</keyword>
<keyword id="KW-0819">tRNA processing</keyword>